<organism>
    <name type="scientific">Caenorhabditis elegans</name>
    <dbReference type="NCBI Taxonomy" id="6239"/>
    <lineage>
        <taxon>Eukaryota</taxon>
        <taxon>Metazoa</taxon>
        <taxon>Ecdysozoa</taxon>
        <taxon>Nematoda</taxon>
        <taxon>Chromadorea</taxon>
        <taxon>Rhabditida</taxon>
        <taxon>Rhabditina</taxon>
        <taxon>Rhabditomorpha</taxon>
        <taxon>Rhabditoidea</taxon>
        <taxon>Rhabditidae</taxon>
        <taxon>Peloderinae</taxon>
        <taxon>Caenorhabditis</taxon>
    </lineage>
</organism>
<feature type="chain" id="PRO_0000248514" description="Mannosyl-oligosaccharide 1,2-alpha-mannosidase mans-2">
    <location>
        <begin position="1"/>
        <end position="590"/>
    </location>
</feature>
<feature type="topological domain" description="Cytoplasmic" evidence="4">
    <location>
        <begin position="1"/>
        <end position="9"/>
    </location>
</feature>
<feature type="transmembrane region" description="Helical; Signal-anchor for type II membrane protein" evidence="4">
    <location>
        <begin position="10"/>
        <end position="30"/>
    </location>
</feature>
<feature type="topological domain" description="Lumenal" evidence="4">
    <location>
        <begin position="31"/>
        <end position="590"/>
    </location>
</feature>
<feature type="region of interest" description="Disordered" evidence="5">
    <location>
        <begin position="88"/>
        <end position="112"/>
    </location>
</feature>
<feature type="compositionally biased region" description="Basic and acidic residues" evidence="5">
    <location>
        <begin position="88"/>
        <end position="102"/>
    </location>
</feature>
<feature type="active site" description="Proton donor" evidence="1">
    <location>
        <position position="470"/>
    </location>
</feature>
<feature type="binding site" evidence="2">
    <location>
        <position position="580"/>
    </location>
    <ligand>
        <name>Ca(2+)</name>
        <dbReference type="ChEBI" id="CHEBI:29108"/>
    </ligand>
</feature>
<feature type="glycosylation site" description="N-linked (GlcNAc...) asparagine" evidence="7">
    <location>
        <position position="156"/>
    </location>
</feature>
<feature type="glycosylation site" description="N-linked (GlcNAc...) asparagine" evidence="4">
    <location>
        <position position="212"/>
    </location>
</feature>
<feature type="glycosylation site" description="N-linked (GlcNAc...) asparagine" evidence="6 7">
    <location>
        <position position="373"/>
    </location>
</feature>
<feature type="glycosylation site" description="N-linked (GlcNAc...) asparagine" evidence="7">
    <location>
        <position position="402"/>
    </location>
</feature>
<feature type="disulfide bond" evidence="2">
    <location>
        <begin position="423"/>
        <end position="456"/>
    </location>
</feature>
<comment type="function">
    <text evidence="2">Involved in the maturation of Asn-linked oligosaccharides. Progressively trim alpha-1,2-linked mannose residues from Man(9)GlcNAc(2) to produce Man(5)GlcNAc(2) (By similarity).</text>
</comment>
<comment type="catalytic activity">
    <reaction evidence="2">
        <text>N(4)-(alpha-D-Man-(1-&gt;2)-alpha-D-Man-(1-&gt;2)-alpha-D-Man-(1-&gt;3)-[alpha-D-Man-(1-&gt;2)-alpha-D-Man-(1-&gt;3)-[alpha-D-Man-(1-&gt;2)-alpha-D-Man-(1-&gt;6)]-alpha-D-Man-(1-&gt;6)]-beta-D-Man-(1-&gt;4)-beta-D-GlcNAc-(1-&gt;4)-beta-D-GlcNAc)-L-asparaginyl-[protein] (N-glucan mannose isomer 9A1,2,3B1,2,3) + 4 H2O = N(4)-(alpha-D-Man-(1-&gt;3)-[alpha-D-Man-(1-&gt;3)-[alpha-D-Man-(1-&gt;6)]-alpha-D-Man-(1-&gt;6)]-beta-D-Man-(1-&gt;4)-beta-D-GlcNAc-(1-&gt;4)-beta-D-GlcNAc)-L-asparaginyl-[protein] (N-glucan mannose isomer 5A1,2) + 4 beta-D-mannose</text>
        <dbReference type="Rhea" id="RHEA:56008"/>
        <dbReference type="Rhea" id="RHEA-COMP:14356"/>
        <dbReference type="Rhea" id="RHEA-COMP:14367"/>
        <dbReference type="ChEBI" id="CHEBI:15377"/>
        <dbReference type="ChEBI" id="CHEBI:28563"/>
        <dbReference type="ChEBI" id="CHEBI:59087"/>
        <dbReference type="ChEBI" id="CHEBI:139493"/>
        <dbReference type="EC" id="3.2.1.113"/>
    </reaction>
</comment>
<comment type="catalytic activity">
    <reaction evidence="2">
        <text>N(4)-(alpha-D-Man-(1-&gt;2)-alpha-D-Man-(1-&gt;2)-alpha-D-Man-(1-&gt;3)-[alpha-D-Man-(1-&gt;3)-[alpha-D-Man-(1-&gt;2)-alpha-D-Man-(1-&gt;6)]-alpha-D-Man-(1-&gt;6)]-beta-D-Man-(1-&gt;4)-beta-D-GlcNAc-(1-&gt;4)-beta-D-GlcNAc)-L-asparaginyl-[protein] (N-glucan mannose isomer 8A1,2,3B1,3) + 3 H2O = N(4)-(alpha-D-Man-(1-&gt;3)-[alpha-D-Man-(1-&gt;3)-[alpha-D-Man-(1-&gt;6)]-alpha-D-Man-(1-&gt;6)]-beta-D-Man-(1-&gt;4)-beta-D-GlcNAc-(1-&gt;4)-beta-D-GlcNAc)-L-asparaginyl-[protein] (N-glucan mannose isomer 5A1,2) + 3 beta-D-mannose</text>
        <dbReference type="Rhea" id="RHEA:56028"/>
        <dbReference type="Rhea" id="RHEA-COMP:14358"/>
        <dbReference type="Rhea" id="RHEA-COMP:14367"/>
        <dbReference type="ChEBI" id="CHEBI:15377"/>
        <dbReference type="ChEBI" id="CHEBI:28563"/>
        <dbReference type="ChEBI" id="CHEBI:59087"/>
        <dbReference type="ChEBI" id="CHEBI:60628"/>
        <dbReference type="EC" id="3.2.1.113"/>
    </reaction>
</comment>
<comment type="cofactor">
    <cofactor evidence="3">
        <name>Ca(2+)</name>
        <dbReference type="ChEBI" id="CHEBI:29108"/>
    </cofactor>
</comment>
<comment type="pathway">
    <text evidence="2">Protein modification; protein glycosylation.</text>
</comment>
<comment type="subcellular location">
    <subcellularLocation>
        <location>Membrane</location>
        <topology>Single-pass type II membrane protein</topology>
    </subcellularLocation>
</comment>
<comment type="similarity">
    <text evidence="8">Belongs to the glycosyl hydrolase 47 family.</text>
</comment>
<dbReference type="EC" id="3.2.1.113" evidence="2"/>
<dbReference type="EMBL" id="Z78012">
    <property type="protein sequence ID" value="CAB01415.1"/>
    <property type="molecule type" value="Genomic_DNA"/>
</dbReference>
<dbReference type="EMBL" id="Z78012">
    <property type="protein sequence ID" value="CBW48349.1"/>
    <property type="molecule type" value="Genomic_DNA"/>
</dbReference>
<dbReference type="PIR" id="T20153">
    <property type="entry name" value="T20153"/>
</dbReference>
<dbReference type="RefSeq" id="NP_001256389.1">
    <property type="nucleotide sequence ID" value="NM_001269460.4"/>
</dbReference>
<dbReference type="SMR" id="Q18788"/>
<dbReference type="BioGRID" id="44666">
    <property type="interactions" value="1"/>
</dbReference>
<dbReference type="FunCoup" id="Q18788">
    <property type="interactions" value="1990"/>
</dbReference>
<dbReference type="IntAct" id="Q18788">
    <property type="interactions" value="1"/>
</dbReference>
<dbReference type="MINT" id="Q18788"/>
<dbReference type="STRING" id="6239.C52E4.5.2"/>
<dbReference type="CAZy" id="GH47">
    <property type="family name" value="Glycoside Hydrolase Family 47"/>
</dbReference>
<dbReference type="iPTMnet" id="Q18788"/>
<dbReference type="PaxDb" id="6239-C52E4.5b"/>
<dbReference type="PeptideAtlas" id="Q18788"/>
<dbReference type="EnsemblMetazoa" id="C52E4.5.1">
    <property type="protein sequence ID" value="C52E4.5.1"/>
    <property type="gene ID" value="WBGene00008258"/>
</dbReference>
<dbReference type="GeneID" id="179642"/>
<dbReference type="KEGG" id="cel:CELE_C52E4.5"/>
<dbReference type="UCSC" id="C52E4.5">
    <property type="organism name" value="c. elegans"/>
</dbReference>
<dbReference type="AGR" id="WB:WBGene00008258"/>
<dbReference type="CTD" id="179642"/>
<dbReference type="WormBase" id="C52E4.5">
    <property type="protein sequence ID" value="CE08947"/>
    <property type="gene ID" value="WBGene00008258"/>
    <property type="gene designation" value="mans-2"/>
</dbReference>
<dbReference type="eggNOG" id="KOG2204">
    <property type="taxonomic scope" value="Eukaryota"/>
</dbReference>
<dbReference type="GeneTree" id="ENSGT00940000167910"/>
<dbReference type="HOGENOM" id="CLU_003818_3_2_1"/>
<dbReference type="InParanoid" id="Q18788"/>
<dbReference type="OMA" id="NICFACL"/>
<dbReference type="OrthoDB" id="8118055at2759"/>
<dbReference type="PhylomeDB" id="Q18788"/>
<dbReference type="Reactome" id="R-CEL-964827">
    <property type="pathway name" value="Progressive trimming of alpha-1,2-linked mannose residues from Man9/8/7GlcNAc2 to produce Man5GlcNAc2"/>
</dbReference>
<dbReference type="UniPathway" id="UPA00378"/>
<dbReference type="PRO" id="PR:Q18788"/>
<dbReference type="Proteomes" id="UP000001940">
    <property type="component" value="Chromosome V"/>
</dbReference>
<dbReference type="GO" id="GO:0005783">
    <property type="term" value="C:endoplasmic reticulum"/>
    <property type="evidence" value="ECO:0000318"/>
    <property type="project" value="GO_Central"/>
</dbReference>
<dbReference type="GO" id="GO:0000139">
    <property type="term" value="C:Golgi membrane"/>
    <property type="evidence" value="ECO:0000318"/>
    <property type="project" value="GO_Central"/>
</dbReference>
<dbReference type="GO" id="GO:0005509">
    <property type="term" value="F:calcium ion binding"/>
    <property type="evidence" value="ECO:0007669"/>
    <property type="project" value="InterPro"/>
</dbReference>
<dbReference type="GO" id="GO:0004571">
    <property type="term" value="F:mannosyl-oligosaccharide 1,2-alpha-mannosidase activity"/>
    <property type="evidence" value="ECO:0000318"/>
    <property type="project" value="GO_Central"/>
</dbReference>
<dbReference type="GO" id="GO:0005975">
    <property type="term" value="P:carbohydrate metabolic process"/>
    <property type="evidence" value="ECO:0007669"/>
    <property type="project" value="InterPro"/>
</dbReference>
<dbReference type="GO" id="GO:0036503">
    <property type="term" value="P:ERAD pathway"/>
    <property type="evidence" value="ECO:0000318"/>
    <property type="project" value="GO_Central"/>
</dbReference>
<dbReference type="GO" id="GO:0006486">
    <property type="term" value="P:protein glycosylation"/>
    <property type="evidence" value="ECO:0007669"/>
    <property type="project" value="UniProtKB-UniPathway"/>
</dbReference>
<dbReference type="FunFam" id="1.50.10.10:FF:000055">
    <property type="entry name" value="alpha-1,2-Mannosidase"/>
    <property type="match status" value="1"/>
</dbReference>
<dbReference type="Gene3D" id="1.50.10.10">
    <property type="match status" value="1"/>
</dbReference>
<dbReference type="InterPro" id="IPR012341">
    <property type="entry name" value="6hp_glycosidase-like_sf"/>
</dbReference>
<dbReference type="InterPro" id="IPR001382">
    <property type="entry name" value="Glyco_hydro_47"/>
</dbReference>
<dbReference type="InterPro" id="IPR050749">
    <property type="entry name" value="Glycosyl_Hydrolase_47"/>
</dbReference>
<dbReference type="InterPro" id="IPR036026">
    <property type="entry name" value="Seven-hairpin_glycosidases"/>
</dbReference>
<dbReference type="PANTHER" id="PTHR11742:SF96">
    <property type="entry name" value="MANNOSYL-OLIGOSACCHARIDE 1,2-ALPHA-MANNOSIDASE C52E4.5"/>
    <property type="match status" value="1"/>
</dbReference>
<dbReference type="PANTHER" id="PTHR11742">
    <property type="entry name" value="MANNOSYL-OLIGOSACCHARIDE ALPHA-1,2-MANNOSIDASE-RELATED"/>
    <property type="match status" value="1"/>
</dbReference>
<dbReference type="Pfam" id="PF01532">
    <property type="entry name" value="Glyco_hydro_47"/>
    <property type="match status" value="1"/>
</dbReference>
<dbReference type="PRINTS" id="PR00747">
    <property type="entry name" value="GLYHDRLASE47"/>
</dbReference>
<dbReference type="SUPFAM" id="SSF48225">
    <property type="entry name" value="Seven-hairpin glycosidases"/>
    <property type="match status" value="1"/>
</dbReference>
<gene>
    <name evidence="9" type="primary">mans-2</name>
    <name evidence="9" type="ORF">C52E4.5</name>
</gene>
<accession>Q18788</accession>
<accession>E1B6T6</accession>
<evidence type="ECO:0000250" key="1">
    <source>
        <dbReference type="UniProtKB" id="P31723"/>
    </source>
</evidence>
<evidence type="ECO:0000250" key="2">
    <source>
        <dbReference type="UniProtKB" id="P32906"/>
    </source>
</evidence>
<evidence type="ECO:0000250" key="3">
    <source>
        <dbReference type="UniProtKB" id="P45700"/>
    </source>
</evidence>
<evidence type="ECO:0000255" key="4"/>
<evidence type="ECO:0000256" key="5">
    <source>
        <dbReference type="SAM" id="MobiDB-lite"/>
    </source>
</evidence>
<evidence type="ECO:0000269" key="6">
    <source>
    </source>
</evidence>
<evidence type="ECO:0000269" key="7">
    <source>
    </source>
</evidence>
<evidence type="ECO:0000305" key="8"/>
<evidence type="ECO:0000312" key="9">
    <source>
        <dbReference type="WormBase" id="C52E4.5"/>
    </source>
</evidence>
<name>MAN12_CAEEL</name>
<reference key="1">
    <citation type="journal article" date="1998" name="Science">
        <title>Genome sequence of the nematode C. elegans: a platform for investigating biology.</title>
        <authorList>
            <consortium name="The C. elegans sequencing consortium"/>
        </authorList>
    </citation>
    <scope>NUCLEOTIDE SEQUENCE [LARGE SCALE GENOMIC DNA]</scope>
    <scope>ALTERNATIVE SPLICING</scope>
    <source>
        <strain>Bristol N2</strain>
    </source>
</reference>
<reference key="2">
    <citation type="journal article" date="2003" name="Nat. Biotechnol.">
        <title>Lectin affinity capture, isotope-coded tagging and mass spectrometry to identify N-linked glycoproteins.</title>
        <authorList>
            <person name="Kaji H."/>
            <person name="Saito H."/>
            <person name="Yamauchi Y."/>
            <person name="Shinkawa T."/>
            <person name="Taoka M."/>
            <person name="Hirabayashi J."/>
            <person name="Kasai K."/>
            <person name="Takahashi N."/>
            <person name="Isobe T."/>
        </authorList>
    </citation>
    <scope>GLYCOSYLATION [LARGE SCALE ANALYSIS] AT ASN-373</scope>
    <scope>IDENTIFICATION BY MASS SPECTROMETRY</scope>
    <source>
        <strain>Bristol N2</strain>
    </source>
</reference>
<reference key="3">
    <citation type="journal article" date="2007" name="Mol. Cell. Proteomics">
        <title>Proteomics reveals N-linked glycoprotein diversity in Caenorhabditis elegans and suggests an atypical translocation mechanism for integral membrane proteins.</title>
        <authorList>
            <person name="Kaji H."/>
            <person name="Kamiie J."/>
            <person name="Kawakami H."/>
            <person name="Kido K."/>
            <person name="Yamauchi Y."/>
            <person name="Shinkawa T."/>
            <person name="Taoka M."/>
            <person name="Takahashi N."/>
            <person name="Isobe T."/>
        </authorList>
    </citation>
    <scope>GLYCOSYLATION [LARGE SCALE ANALYSIS] AT ASN-156; ASN-373 AND ASN-402</scope>
    <scope>IDENTIFICATION BY MASS SPECTROMETRY</scope>
    <source>
        <strain>Bristol N2</strain>
    </source>
</reference>
<keyword id="KW-0106">Calcium</keyword>
<keyword id="KW-1015">Disulfide bond</keyword>
<keyword id="KW-0325">Glycoprotein</keyword>
<keyword id="KW-0326">Glycosidase</keyword>
<keyword id="KW-0378">Hydrolase</keyword>
<keyword id="KW-0472">Membrane</keyword>
<keyword id="KW-0479">Metal-binding</keyword>
<keyword id="KW-1185">Reference proteome</keyword>
<keyword id="KW-0735">Signal-anchor</keyword>
<keyword id="KW-0812">Transmembrane</keyword>
<keyword id="KW-1133">Transmembrane helix</keyword>
<sequence>MKTVRFNKQALAILAACFIFLLCVVCYFSASSESHNAVVVGERARGHIAVRDVENRHLAEEKHAVIHAKTVGKIERVVSQEKVEILRPARVESKPPGEKTSTEPEETGVGKAPIQTSEGLEKLIGKIHYENKDEENDLRRQKVKEMMIHAWEGYKNYSWGANELRPMSKKPNSQNIFGGSQMPATIVDAADTLFIMDLKDKYKEARDYIENNFSMAKSTSTLSVFETTIRFLGGLLSLYALTQESFYIEKAREVGEALLPAFNTPSGIPKSNLDVASKHASNYGWANGGQSILSEIGSLHLEFLYLSRISNAPIFEKKVKKVRDALEKAEKPNGLYSNYINPDTGKFTGSHMSLGALGDSFYEYLIKSYVQSNYTDTQAKNMYWDVSDAIQKHMIKVSKQSNLTYTVELNNGQAQHKMGHLACFVPGMFALQAINEDTEEEKLRIMTLAEELAKTCHESYIRSETHIGPEMFYFNERDEATSKHSENGYIQRPEVIEGWFYLWRLTGKTMYRDWVWDAVQAIEKYCRVDSGFTGLQNVYNPKAGREDVMQSFFLAEFLKYAYLTFADESLISLDKWVFNTEAHPVPVLTN</sequence>
<protein>
    <recommendedName>
        <fullName evidence="8">Mannosyl-oligosaccharide 1,2-alpha-mannosidase mans-2</fullName>
        <ecNumber evidence="2">3.2.1.113</ecNumber>
    </recommendedName>
    <alternativeName>
        <fullName>Processing alpha-1,2-mannosidase C52E4.5</fullName>
        <shortName>Alpha-1,2-mannosidase C52E4.5</shortName>
    </alternativeName>
</protein>
<proteinExistence type="evidence at protein level"/>